<protein>
    <recommendedName>
        <fullName evidence="1">NADH-quinone oxidoreductase subunit B</fullName>
        <ecNumber evidence="1">7.1.1.-</ecNumber>
    </recommendedName>
    <alternativeName>
        <fullName evidence="1">NADH dehydrogenase I subunit B</fullName>
    </alternativeName>
    <alternativeName>
        <fullName evidence="1">NDH-1 subunit B</fullName>
    </alternativeName>
</protein>
<name>NUOB_BAUCH</name>
<dbReference type="EC" id="7.1.1.-" evidence="1"/>
<dbReference type="EMBL" id="CP000238">
    <property type="protein sequence ID" value="ABF14336.1"/>
    <property type="molecule type" value="Genomic_DNA"/>
</dbReference>
<dbReference type="RefSeq" id="WP_011520557.1">
    <property type="nucleotide sequence ID" value="NC_007984.1"/>
</dbReference>
<dbReference type="SMR" id="Q1LT90"/>
<dbReference type="STRING" id="374463.BCI_0380"/>
<dbReference type="KEGG" id="bci:BCI_0380"/>
<dbReference type="HOGENOM" id="CLU_055737_7_3_6"/>
<dbReference type="OrthoDB" id="9786737at2"/>
<dbReference type="Proteomes" id="UP000002427">
    <property type="component" value="Chromosome"/>
</dbReference>
<dbReference type="GO" id="GO:0005886">
    <property type="term" value="C:plasma membrane"/>
    <property type="evidence" value="ECO:0007669"/>
    <property type="project" value="UniProtKB-SubCell"/>
</dbReference>
<dbReference type="GO" id="GO:0045271">
    <property type="term" value="C:respiratory chain complex I"/>
    <property type="evidence" value="ECO:0007669"/>
    <property type="project" value="TreeGrafter"/>
</dbReference>
<dbReference type="GO" id="GO:0051539">
    <property type="term" value="F:4 iron, 4 sulfur cluster binding"/>
    <property type="evidence" value="ECO:0007669"/>
    <property type="project" value="UniProtKB-KW"/>
</dbReference>
<dbReference type="GO" id="GO:0005506">
    <property type="term" value="F:iron ion binding"/>
    <property type="evidence" value="ECO:0007669"/>
    <property type="project" value="UniProtKB-UniRule"/>
</dbReference>
<dbReference type="GO" id="GO:0008137">
    <property type="term" value="F:NADH dehydrogenase (ubiquinone) activity"/>
    <property type="evidence" value="ECO:0007669"/>
    <property type="project" value="InterPro"/>
</dbReference>
<dbReference type="GO" id="GO:0050136">
    <property type="term" value="F:NADH:ubiquinone reductase (non-electrogenic) activity"/>
    <property type="evidence" value="ECO:0007669"/>
    <property type="project" value="UniProtKB-UniRule"/>
</dbReference>
<dbReference type="GO" id="GO:0048038">
    <property type="term" value="F:quinone binding"/>
    <property type="evidence" value="ECO:0007669"/>
    <property type="project" value="UniProtKB-KW"/>
</dbReference>
<dbReference type="GO" id="GO:0009060">
    <property type="term" value="P:aerobic respiration"/>
    <property type="evidence" value="ECO:0007669"/>
    <property type="project" value="TreeGrafter"/>
</dbReference>
<dbReference type="GO" id="GO:0015990">
    <property type="term" value="P:electron transport coupled proton transport"/>
    <property type="evidence" value="ECO:0007669"/>
    <property type="project" value="TreeGrafter"/>
</dbReference>
<dbReference type="FunFam" id="3.40.50.12280:FF:000002">
    <property type="entry name" value="NADH-quinone oxidoreductase subunit B"/>
    <property type="match status" value="1"/>
</dbReference>
<dbReference type="Gene3D" id="3.40.50.12280">
    <property type="match status" value="1"/>
</dbReference>
<dbReference type="HAMAP" id="MF_01356">
    <property type="entry name" value="NDH1_NuoB"/>
    <property type="match status" value="1"/>
</dbReference>
<dbReference type="InterPro" id="IPR006137">
    <property type="entry name" value="NADH_UbQ_OxRdtase-like_20kDa"/>
</dbReference>
<dbReference type="InterPro" id="IPR006138">
    <property type="entry name" value="NADH_UQ_OxRdtase_20Kd_su"/>
</dbReference>
<dbReference type="NCBIfam" id="TIGR01957">
    <property type="entry name" value="nuoB_fam"/>
    <property type="match status" value="1"/>
</dbReference>
<dbReference type="NCBIfam" id="NF005012">
    <property type="entry name" value="PRK06411.1"/>
    <property type="match status" value="1"/>
</dbReference>
<dbReference type="PANTHER" id="PTHR11995">
    <property type="entry name" value="NADH DEHYDROGENASE"/>
    <property type="match status" value="1"/>
</dbReference>
<dbReference type="PANTHER" id="PTHR11995:SF14">
    <property type="entry name" value="NADH DEHYDROGENASE [UBIQUINONE] IRON-SULFUR PROTEIN 7, MITOCHONDRIAL"/>
    <property type="match status" value="1"/>
</dbReference>
<dbReference type="Pfam" id="PF01058">
    <property type="entry name" value="Oxidored_q6"/>
    <property type="match status" value="1"/>
</dbReference>
<dbReference type="SUPFAM" id="SSF56770">
    <property type="entry name" value="HydA/Nqo6-like"/>
    <property type="match status" value="1"/>
</dbReference>
<dbReference type="PROSITE" id="PS01150">
    <property type="entry name" value="COMPLEX1_20K"/>
    <property type="match status" value="1"/>
</dbReference>
<comment type="function">
    <text evidence="1">NDH-1 shuttles electrons from NADH, via FMN and iron-sulfur (Fe-S) centers, to quinones in the respiratory chain. The immediate electron acceptor for the enzyme in this species is believed to be ubiquinone. Couples the redox reaction to proton translocation (for every two electrons transferred, four hydrogen ions are translocated across the cytoplasmic membrane), and thus conserves the redox energy in a proton gradient.</text>
</comment>
<comment type="catalytic activity">
    <reaction evidence="1">
        <text>a quinone + NADH + 5 H(+)(in) = a quinol + NAD(+) + 4 H(+)(out)</text>
        <dbReference type="Rhea" id="RHEA:57888"/>
        <dbReference type="ChEBI" id="CHEBI:15378"/>
        <dbReference type="ChEBI" id="CHEBI:24646"/>
        <dbReference type="ChEBI" id="CHEBI:57540"/>
        <dbReference type="ChEBI" id="CHEBI:57945"/>
        <dbReference type="ChEBI" id="CHEBI:132124"/>
    </reaction>
</comment>
<comment type="cofactor">
    <cofactor evidence="1">
        <name>[4Fe-4S] cluster</name>
        <dbReference type="ChEBI" id="CHEBI:49883"/>
    </cofactor>
    <text evidence="1">Binds 1 [4Fe-4S] cluster.</text>
</comment>
<comment type="subunit">
    <text evidence="1">NDH-1 is composed of 14 different subunits. Subunits NuoB, C, D, E, F, and G constitute the peripheral sector of the complex.</text>
</comment>
<comment type="subcellular location">
    <subcellularLocation>
        <location evidence="1">Cell membrane</location>
        <topology evidence="1">Peripheral membrane protein</topology>
        <orientation evidence="1">Cytoplasmic side</orientation>
    </subcellularLocation>
</comment>
<comment type="similarity">
    <text evidence="1">Belongs to the complex I 20 kDa subunit family.</text>
</comment>
<sequence length="224" mass="25527">MNYTLTRILSNSKENRKSLQEDDSATLLIEQHVNSNIYLGKLKHILKSIVKWGRGNSLWPYNFGLSCCYVEMTTSFTAVHDVARFGSEVIRASPRQADFMVIAGTPFIKMAPVIKRLYDQMLEPKWVISMGSCANSGGMYDIYSVVQGVDKFLPVDVYIPGCPPRPEAYIQALLLLKEAIGKEQRPLSWIVGDQGIYRANMESERKRKHNERAKMTYLRSPEEI</sequence>
<feature type="chain" id="PRO_0000376148" description="NADH-quinone oxidoreductase subunit B">
    <location>
        <begin position="1"/>
        <end position="224"/>
    </location>
</feature>
<feature type="binding site" evidence="1">
    <location>
        <position position="67"/>
    </location>
    <ligand>
        <name>[4Fe-4S] cluster</name>
        <dbReference type="ChEBI" id="CHEBI:49883"/>
    </ligand>
</feature>
<feature type="binding site" evidence="1">
    <location>
        <position position="68"/>
    </location>
    <ligand>
        <name>[4Fe-4S] cluster</name>
        <dbReference type="ChEBI" id="CHEBI:49883"/>
    </ligand>
</feature>
<feature type="binding site" evidence="1">
    <location>
        <position position="133"/>
    </location>
    <ligand>
        <name>[4Fe-4S] cluster</name>
        <dbReference type="ChEBI" id="CHEBI:49883"/>
    </ligand>
</feature>
<feature type="binding site" evidence="1">
    <location>
        <position position="162"/>
    </location>
    <ligand>
        <name>[4Fe-4S] cluster</name>
        <dbReference type="ChEBI" id="CHEBI:49883"/>
    </ligand>
</feature>
<evidence type="ECO:0000255" key="1">
    <source>
        <dbReference type="HAMAP-Rule" id="MF_01356"/>
    </source>
</evidence>
<reference key="1">
    <citation type="journal article" date="2006" name="PLoS Biol.">
        <title>Metabolic complementarity and genomics of the dual bacterial symbiosis of sharpshooters.</title>
        <authorList>
            <person name="Wu D."/>
            <person name="Daugherty S.C."/>
            <person name="Van Aken S.E."/>
            <person name="Pai G.H."/>
            <person name="Watkins K.L."/>
            <person name="Khouri H."/>
            <person name="Tallon L.J."/>
            <person name="Zaborsky J.M."/>
            <person name="Dunbar H.E."/>
            <person name="Tran P.L."/>
            <person name="Moran N.A."/>
            <person name="Eisen J.A."/>
        </authorList>
    </citation>
    <scope>NUCLEOTIDE SEQUENCE [LARGE SCALE GENOMIC DNA]</scope>
</reference>
<accession>Q1LT90</accession>
<proteinExistence type="inferred from homology"/>
<keyword id="KW-0004">4Fe-4S</keyword>
<keyword id="KW-1003">Cell membrane</keyword>
<keyword id="KW-0408">Iron</keyword>
<keyword id="KW-0411">Iron-sulfur</keyword>
<keyword id="KW-0472">Membrane</keyword>
<keyword id="KW-0479">Metal-binding</keyword>
<keyword id="KW-0520">NAD</keyword>
<keyword id="KW-0874">Quinone</keyword>
<keyword id="KW-1185">Reference proteome</keyword>
<keyword id="KW-1278">Translocase</keyword>
<keyword id="KW-0813">Transport</keyword>
<keyword id="KW-0830">Ubiquinone</keyword>
<organism>
    <name type="scientific">Baumannia cicadellinicola subsp. Homalodisca coagulata</name>
    <dbReference type="NCBI Taxonomy" id="374463"/>
    <lineage>
        <taxon>Bacteria</taxon>
        <taxon>Pseudomonadati</taxon>
        <taxon>Pseudomonadota</taxon>
        <taxon>Gammaproteobacteria</taxon>
        <taxon>Candidatus Palibaumannia</taxon>
    </lineage>
</organism>
<gene>
    <name evidence="1" type="primary">nuoB</name>
    <name type="ordered locus">BCI_0380</name>
</gene>